<accession>Q493U5</accession>
<name>OBG_BLOPB</name>
<protein>
    <recommendedName>
        <fullName evidence="1">GTPase Obg</fullName>
        <ecNumber evidence="1">3.6.5.-</ecNumber>
    </recommendedName>
    <alternativeName>
        <fullName evidence="1">GTP-binding protein Obg</fullName>
    </alternativeName>
</protein>
<gene>
    <name evidence="1" type="primary">obg</name>
    <name type="ordered locus">BPEN_098</name>
</gene>
<dbReference type="EC" id="3.6.5.-" evidence="1"/>
<dbReference type="EMBL" id="CP000016">
    <property type="protein sequence ID" value="AAZ40740.1"/>
    <property type="molecule type" value="Genomic_DNA"/>
</dbReference>
<dbReference type="RefSeq" id="WP_011282647.1">
    <property type="nucleotide sequence ID" value="NC_007292.1"/>
</dbReference>
<dbReference type="SMR" id="Q493U5"/>
<dbReference type="STRING" id="291272.BPEN_098"/>
<dbReference type="KEGG" id="bpn:BPEN_098"/>
<dbReference type="eggNOG" id="COG0536">
    <property type="taxonomic scope" value="Bacteria"/>
</dbReference>
<dbReference type="HOGENOM" id="CLU_011747_2_0_6"/>
<dbReference type="OrthoDB" id="9807318at2"/>
<dbReference type="Proteomes" id="UP000007794">
    <property type="component" value="Chromosome"/>
</dbReference>
<dbReference type="GO" id="GO:0005737">
    <property type="term" value="C:cytoplasm"/>
    <property type="evidence" value="ECO:0007669"/>
    <property type="project" value="UniProtKB-SubCell"/>
</dbReference>
<dbReference type="GO" id="GO:0005525">
    <property type="term" value="F:GTP binding"/>
    <property type="evidence" value="ECO:0007669"/>
    <property type="project" value="UniProtKB-UniRule"/>
</dbReference>
<dbReference type="GO" id="GO:0003924">
    <property type="term" value="F:GTPase activity"/>
    <property type="evidence" value="ECO:0007669"/>
    <property type="project" value="UniProtKB-UniRule"/>
</dbReference>
<dbReference type="GO" id="GO:0000287">
    <property type="term" value="F:magnesium ion binding"/>
    <property type="evidence" value="ECO:0007669"/>
    <property type="project" value="InterPro"/>
</dbReference>
<dbReference type="GO" id="GO:0042254">
    <property type="term" value="P:ribosome biogenesis"/>
    <property type="evidence" value="ECO:0007669"/>
    <property type="project" value="UniProtKB-UniRule"/>
</dbReference>
<dbReference type="CDD" id="cd01898">
    <property type="entry name" value="Obg"/>
    <property type="match status" value="1"/>
</dbReference>
<dbReference type="FunFam" id="2.70.210.12:FF:000001">
    <property type="entry name" value="GTPase Obg"/>
    <property type="match status" value="1"/>
</dbReference>
<dbReference type="Gene3D" id="2.70.210.12">
    <property type="entry name" value="GTP1/OBG domain"/>
    <property type="match status" value="1"/>
</dbReference>
<dbReference type="Gene3D" id="3.40.50.300">
    <property type="entry name" value="P-loop containing nucleotide triphosphate hydrolases"/>
    <property type="match status" value="1"/>
</dbReference>
<dbReference type="HAMAP" id="MF_01454">
    <property type="entry name" value="GTPase_Obg"/>
    <property type="match status" value="1"/>
</dbReference>
<dbReference type="InterPro" id="IPR031167">
    <property type="entry name" value="G_OBG"/>
</dbReference>
<dbReference type="InterPro" id="IPR006073">
    <property type="entry name" value="GTP-bd"/>
</dbReference>
<dbReference type="InterPro" id="IPR014100">
    <property type="entry name" value="GTP-bd_Obg/CgtA"/>
</dbReference>
<dbReference type="InterPro" id="IPR006074">
    <property type="entry name" value="GTP1-OBG_CS"/>
</dbReference>
<dbReference type="InterPro" id="IPR006169">
    <property type="entry name" value="GTP1_OBG_dom"/>
</dbReference>
<dbReference type="InterPro" id="IPR036726">
    <property type="entry name" value="GTP1_OBG_dom_sf"/>
</dbReference>
<dbReference type="InterPro" id="IPR045086">
    <property type="entry name" value="OBG_GTPase"/>
</dbReference>
<dbReference type="InterPro" id="IPR027417">
    <property type="entry name" value="P-loop_NTPase"/>
</dbReference>
<dbReference type="NCBIfam" id="TIGR02729">
    <property type="entry name" value="Obg_CgtA"/>
    <property type="match status" value="1"/>
</dbReference>
<dbReference type="NCBIfam" id="NF008956">
    <property type="entry name" value="PRK12299.1"/>
    <property type="match status" value="1"/>
</dbReference>
<dbReference type="PANTHER" id="PTHR11702">
    <property type="entry name" value="DEVELOPMENTALLY REGULATED GTP-BINDING PROTEIN-RELATED"/>
    <property type="match status" value="1"/>
</dbReference>
<dbReference type="PANTHER" id="PTHR11702:SF31">
    <property type="entry name" value="MITOCHONDRIAL RIBOSOME-ASSOCIATED GTPASE 2"/>
    <property type="match status" value="1"/>
</dbReference>
<dbReference type="Pfam" id="PF01018">
    <property type="entry name" value="GTP1_OBG"/>
    <property type="match status" value="1"/>
</dbReference>
<dbReference type="Pfam" id="PF01926">
    <property type="entry name" value="MMR_HSR1"/>
    <property type="match status" value="1"/>
</dbReference>
<dbReference type="PIRSF" id="PIRSF002401">
    <property type="entry name" value="GTP_bd_Obg/CgtA"/>
    <property type="match status" value="1"/>
</dbReference>
<dbReference type="PRINTS" id="PR00326">
    <property type="entry name" value="GTP1OBG"/>
</dbReference>
<dbReference type="SUPFAM" id="SSF82051">
    <property type="entry name" value="Obg GTP-binding protein N-terminal domain"/>
    <property type="match status" value="1"/>
</dbReference>
<dbReference type="SUPFAM" id="SSF52540">
    <property type="entry name" value="P-loop containing nucleoside triphosphate hydrolases"/>
    <property type="match status" value="1"/>
</dbReference>
<dbReference type="PROSITE" id="PS51710">
    <property type="entry name" value="G_OBG"/>
    <property type="match status" value="1"/>
</dbReference>
<dbReference type="PROSITE" id="PS00905">
    <property type="entry name" value="GTP1_OBG"/>
    <property type="match status" value="1"/>
</dbReference>
<dbReference type="PROSITE" id="PS51883">
    <property type="entry name" value="OBG"/>
    <property type="match status" value="1"/>
</dbReference>
<proteinExistence type="inferred from homology"/>
<evidence type="ECO:0000255" key="1">
    <source>
        <dbReference type="HAMAP-Rule" id="MF_01454"/>
    </source>
</evidence>
<evidence type="ECO:0000255" key="2">
    <source>
        <dbReference type="PROSITE-ProRule" id="PRU01231"/>
    </source>
</evidence>
<feature type="chain" id="PRO_0000385747" description="GTPase Obg">
    <location>
        <begin position="1"/>
        <end position="340"/>
    </location>
</feature>
<feature type="domain" description="Obg" evidence="2">
    <location>
        <begin position="1"/>
        <end position="161"/>
    </location>
</feature>
<feature type="domain" description="OBG-type G" evidence="1">
    <location>
        <begin position="162"/>
        <end position="335"/>
    </location>
</feature>
<feature type="binding site" evidence="1">
    <location>
        <begin position="168"/>
        <end position="175"/>
    </location>
    <ligand>
        <name>GTP</name>
        <dbReference type="ChEBI" id="CHEBI:37565"/>
    </ligand>
</feature>
<feature type="binding site" evidence="1">
    <location>
        <position position="175"/>
    </location>
    <ligand>
        <name>Mg(2+)</name>
        <dbReference type="ChEBI" id="CHEBI:18420"/>
    </ligand>
</feature>
<feature type="binding site" evidence="1">
    <location>
        <begin position="193"/>
        <end position="197"/>
    </location>
    <ligand>
        <name>GTP</name>
        <dbReference type="ChEBI" id="CHEBI:37565"/>
    </ligand>
</feature>
<feature type="binding site" evidence="1">
    <location>
        <position position="195"/>
    </location>
    <ligand>
        <name>Mg(2+)</name>
        <dbReference type="ChEBI" id="CHEBI:18420"/>
    </ligand>
</feature>
<feature type="binding site" evidence="1">
    <location>
        <begin position="215"/>
        <end position="218"/>
    </location>
    <ligand>
        <name>GTP</name>
        <dbReference type="ChEBI" id="CHEBI:37565"/>
    </ligand>
</feature>
<feature type="binding site" evidence="1">
    <location>
        <begin position="285"/>
        <end position="288"/>
    </location>
    <ligand>
        <name>GTP</name>
        <dbReference type="ChEBI" id="CHEBI:37565"/>
    </ligand>
</feature>
<feature type="binding site" evidence="1">
    <location>
        <begin position="316"/>
        <end position="318"/>
    </location>
    <ligand>
        <name>GTP</name>
        <dbReference type="ChEBI" id="CHEBI:37565"/>
    </ligand>
</feature>
<sequence>MKFVDMTNITVIAGNGGNGCVSFQKSGRRASFLKKPNGSNGGNGGDVWLLADPNINTLNYFHSNCVFRAGHGQSGRSRGCTGKRGKDVIVKVPWGTRVSYKKTNKLLGDMGIHHKRLMVAKGGRHGLGNGHFKSSLHYCKVLNTNGSTGEFQHLLLELLLIANVGIFGLPNSGKSSFIRIISSAKPKVADYPFTTLVPYLGVVQINNYDRFIIADIPGIIKGASHGLGLGMRFLKHLEHCQILLHFIDIAPVDNSDPLENIITIQHELSNYNENLVRKPCWLIFNKIDLLEQQVAEKRINHVISSLKWKGRYYSISSIHNTNVLSLCNSIMKFIMHHTHS</sequence>
<reference key="1">
    <citation type="journal article" date="2005" name="Genome Res.">
        <title>Genome sequence of Blochmannia pennsylvanicus indicates parallel evolutionary trends among bacterial mutualists of insects.</title>
        <authorList>
            <person name="Degnan P.H."/>
            <person name="Lazarus A.B."/>
            <person name="Wernegreen J.J."/>
        </authorList>
    </citation>
    <scope>NUCLEOTIDE SEQUENCE [LARGE SCALE GENOMIC DNA]</scope>
    <source>
        <strain>BPEN</strain>
    </source>
</reference>
<comment type="function">
    <text evidence="1">An essential GTPase which binds GTP, GDP and possibly (p)ppGpp with moderate affinity, with high nucleotide exchange rates and a fairly low GTP hydrolysis rate. Plays a role in control of the cell cycle, stress response, ribosome biogenesis and in those bacteria that undergo differentiation, in morphogenesis control.</text>
</comment>
<comment type="cofactor">
    <cofactor evidence="1">
        <name>Mg(2+)</name>
        <dbReference type="ChEBI" id="CHEBI:18420"/>
    </cofactor>
</comment>
<comment type="subunit">
    <text evidence="1">Monomer.</text>
</comment>
<comment type="subcellular location">
    <subcellularLocation>
        <location evidence="1">Cytoplasm</location>
    </subcellularLocation>
</comment>
<comment type="similarity">
    <text evidence="1">Belongs to the TRAFAC class OBG-HflX-like GTPase superfamily. OBG GTPase family.</text>
</comment>
<keyword id="KW-0963">Cytoplasm</keyword>
<keyword id="KW-0342">GTP-binding</keyword>
<keyword id="KW-0378">Hydrolase</keyword>
<keyword id="KW-0460">Magnesium</keyword>
<keyword id="KW-0479">Metal-binding</keyword>
<keyword id="KW-0547">Nucleotide-binding</keyword>
<keyword id="KW-1185">Reference proteome</keyword>
<organism>
    <name type="scientific">Blochmanniella pennsylvanica (strain BPEN)</name>
    <dbReference type="NCBI Taxonomy" id="291272"/>
    <lineage>
        <taxon>Bacteria</taxon>
        <taxon>Pseudomonadati</taxon>
        <taxon>Pseudomonadota</taxon>
        <taxon>Gammaproteobacteria</taxon>
        <taxon>Enterobacterales</taxon>
        <taxon>Enterobacteriaceae</taxon>
        <taxon>ant endosymbionts</taxon>
        <taxon>Candidatus Blochmanniella</taxon>
    </lineage>
</organism>